<reference key="1">
    <citation type="journal article" date="1999" name="Mol. Cell. Endocrinol.">
        <title>Cloning and expression of cynomolgus monkey (Macaca fascicularis) gonadotropins luteinizing hormone and follicle-stimulating hormone and identification of two polymorphic sites in the luteinizing hormone beta subunit.</title>
        <authorList>
            <person name="Schmidt A."/>
            <person name="Gromoll J."/>
            <person name="Weinbauer G.F."/>
            <person name="Galla H.J."/>
            <person name="Chappel S."/>
            <person name="Simoni M."/>
        </authorList>
    </citation>
    <scope>NUCLEOTIDE SEQUENCE [MRNA]</scope>
    <scope>FUNCTION</scope>
    <scope>SUBCELLULAR LOCATION</scope>
    <source>
        <tissue>Pituitary</tissue>
    </source>
</reference>
<organism>
    <name type="scientific">Macaca fascicularis</name>
    <name type="common">Crab-eating macaque</name>
    <name type="synonym">Cynomolgus monkey</name>
    <dbReference type="NCBI Taxonomy" id="9541"/>
    <lineage>
        <taxon>Eukaryota</taxon>
        <taxon>Metazoa</taxon>
        <taxon>Chordata</taxon>
        <taxon>Craniata</taxon>
        <taxon>Vertebrata</taxon>
        <taxon>Euteleostomi</taxon>
        <taxon>Mammalia</taxon>
        <taxon>Eutheria</taxon>
        <taxon>Euarchontoglires</taxon>
        <taxon>Primates</taxon>
        <taxon>Haplorrhini</taxon>
        <taxon>Catarrhini</taxon>
        <taxon>Cercopithecidae</taxon>
        <taxon>Cercopithecinae</taxon>
        <taxon>Macaca</taxon>
    </lineage>
</organism>
<evidence type="ECO:0000250" key="1"/>
<evidence type="ECO:0000250" key="2">
    <source>
        <dbReference type="UniProtKB" id="P01225"/>
    </source>
</evidence>
<evidence type="ECO:0000269" key="3">
    <source>
    </source>
</evidence>
<evidence type="ECO:0000305" key="4"/>
<comment type="function">
    <text evidence="2 3">Together with the alpha chain CGA constitutes follitropin, the follicle-stimulating hormone, and provides its biological specificity to the hormone heterodimer. Binds FSHR, a G protein-coupled receptor, on target cells to activate downstream signaling pathways (PubMed:10612425). Follitropin is involved in follicle development and spermatogenesis in reproductive organs (By similarity).</text>
</comment>
<comment type="subunit">
    <text evidence="2">Heterodimer. The active follitropin is a heterodimer composed of an alpha chain/CGA shared with other hormones and a unique beta chain/FSHB shown here.</text>
</comment>
<comment type="subcellular location">
    <subcellularLocation>
        <location evidence="3">Secreted</location>
    </subcellularLocation>
    <text evidence="2">Efficient secretion requires dimerization with CGA.</text>
</comment>
<comment type="similarity">
    <text evidence="4">Belongs to the glycoprotein hormones subunit beta family.</text>
</comment>
<keyword id="KW-1015">Disulfide bond</keyword>
<keyword id="KW-0325">Glycoprotein</keyword>
<keyword id="KW-0372">Hormone</keyword>
<keyword id="KW-1185">Reference proteome</keyword>
<keyword id="KW-0964">Secreted</keyword>
<keyword id="KW-0732">Signal</keyword>
<name>FSHB_MACFA</name>
<dbReference type="EMBL" id="AJ781395">
    <property type="protein sequence ID" value="CAH03729.1"/>
    <property type="molecule type" value="mRNA"/>
</dbReference>
<dbReference type="RefSeq" id="XP_005578391.1">
    <property type="nucleotide sequence ID" value="XM_005578334.4"/>
</dbReference>
<dbReference type="SMR" id="Q6EV79"/>
<dbReference type="STRING" id="9541.ENSMFAP00000042024"/>
<dbReference type="GlyCosmos" id="Q6EV79">
    <property type="glycosylation" value="2 sites, No reported glycans"/>
</dbReference>
<dbReference type="GeneID" id="101864888"/>
<dbReference type="KEGG" id="mcf:101864888"/>
<dbReference type="CTD" id="2488"/>
<dbReference type="VEuPathDB" id="HostDB:ENSMFAG00000039808"/>
<dbReference type="eggNOG" id="ENOG502S39C">
    <property type="taxonomic scope" value="Eukaryota"/>
</dbReference>
<dbReference type="OMA" id="CAGQCYH"/>
<dbReference type="OrthoDB" id="9at314294"/>
<dbReference type="Proteomes" id="UP000233100">
    <property type="component" value="Chromosome 14"/>
</dbReference>
<dbReference type="GO" id="GO:0005737">
    <property type="term" value="C:cytoplasm"/>
    <property type="evidence" value="ECO:0007669"/>
    <property type="project" value="TreeGrafter"/>
</dbReference>
<dbReference type="GO" id="GO:0005615">
    <property type="term" value="C:extracellular space"/>
    <property type="evidence" value="ECO:0000314"/>
    <property type="project" value="UniProtKB"/>
</dbReference>
<dbReference type="GO" id="GO:0016914">
    <property type="term" value="C:follicle-stimulating hormone complex"/>
    <property type="evidence" value="ECO:0000314"/>
    <property type="project" value="UniProtKB"/>
</dbReference>
<dbReference type="GO" id="GO:0016913">
    <property type="term" value="F:follicle-stimulating hormone activity"/>
    <property type="evidence" value="ECO:0000314"/>
    <property type="project" value="UniProtKB"/>
</dbReference>
<dbReference type="GO" id="GO:0042699">
    <property type="term" value="P:follicle-stimulating hormone signaling pathway"/>
    <property type="evidence" value="ECO:0000314"/>
    <property type="project" value="UniProtKB"/>
</dbReference>
<dbReference type="GO" id="GO:0007186">
    <property type="term" value="P:G protein-coupled receptor signaling pathway"/>
    <property type="evidence" value="ECO:0000314"/>
    <property type="project" value="UniProtKB"/>
</dbReference>
<dbReference type="GO" id="GO:0010469">
    <property type="term" value="P:regulation of signaling receptor activity"/>
    <property type="evidence" value="ECO:0000314"/>
    <property type="project" value="UniProtKB"/>
</dbReference>
<dbReference type="CDD" id="cd00069">
    <property type="entry name" value="GHB_like"/>
    <property type="match status" value="1"/>
</dbReference>
<dbReference type="FunFam" id="2.10.90.10:FF:000007">
    <property type="entry name" value="Luteinizing hormone beta subunit"/>
    <property type="match status" value="1"/>
</dbReference>
<dbReference type="Gene3D" id="2.10.90.10">
    <property type="entry name" value="Cystine-knot cytokines"/>
    <property type="match status" value="1"/>
</dbReference>
<dbReference type="InterPro" id="IPR029034">
    <property type="entry name" value="Cystine-knot_cytokine"/>
</dbReference>
<dbReference type="InterPro" id="IPR006208">
    <property type="entry name" value="Glyco_hormone_CN"/>
</dbReference>
<dbReference type="InterPro" id="IPR001545">
    <property type="entry name" value="Gonadotropin_bsu"/>
</dbReference>
<dbReference type="InterPro" id="IPR018245">
    <property type="entry name" value="Gonadotropin_bsu_CS"/>
</dbReference>
<dbReference type="PANTHER" id="PTHR11515:SF17">
    <property type="entry name" value="FOLLITROPIN SUBUNIT BETA"/>
    <property type="match status" value="1"/>
</dbReference>
<dbReference type="PANTHER" id="PTHR11515">
    <property type="entry name" value="GLYCOPROTEIN HORMONE BETA CHAIN"/>
    <property type="match status" value="1"/>
</dbReference>
<dbReference type="Pfam" id="PF00007">
    <property type="entry name" value="Cys_knot"/>
    <property type="match status" value="1"/>
</dbReference>
<dbReference type="SMART" id="SM00068">
    <property type="entry name" value="GHB"/>
    <property type="match status" value="1"/>
</dbReference>
<dbReference type="SUPFAM" id="SSF57501">
    <property type="entry name" value="Cystine-knot cytokines"/>
    <property type="match status" value="1"/>
</dbReference>
<dbReference type="PROSITE" id="PS00261">
    <property type="entry name" value="GLYCO_HORMONE_BETA_1"/>
    <property type="match status" value="1"/>
</dbReference>
<dbReference type="PROSITE" id="PS00689">
    <property type="entry name" value="GLYCO_HORMONE_BETA_2"/>
    <property type="match status" value="1"/>
</dbReference>
<feature type="signal peptide" evidence="1">
    <location>
        <begin position="1"/>
        <end position="18"/>
    </location>
</feature>
<feature type="chain" id="PRO_0000011712" description="Follitropin subunit beta">
    <location>
        <begin position="19"/>
        <end position="129"/>
    </location>
</feature>
<feature type="glycosylation site" description="N-linked (GlcNAc...) asparagine" evidence="2">
    <location>
        <position position="25"/>
    </location>
</feature>
<feature type="glycosylation site" description="N-linked (GlcNAc...) asparagine" evidence="2">
    <location>
        <position position="42"/>
    </location>
</feature>
<feature type="disulfide bond" evidence="2">
    <location>
        <begin position="21"/>
        <end position="69"/>
    </location>
</feature>
<feature type="disulfide bond" evidence="2">
    <location>
        <begin position="35"/>
        <end position="84"/>
    </location>
</feature>
<feature type="disulfide bond" evidence="2">
    <location>
        <begin position="38"/>
        <end position="122"/>
    </location>
</feature>
<feature type="disulfide bond" evidence="2">
    <location>
        <begin position="46"/>
        <end position="100"/>
    </location>
</feature>
<feature type="disulfide bond" evidence="2">
    <location>
        <begin position="50"/>
        <end position="102"/>
    </location>
</feature>
<feature type="disulfide bond" evidence="2">
    <location>
        <begin position="105"/>
        <end position="112"/>
    </location>
</feature>
<protein>
    <recommendedName>
        <fullName>Follitropin subunit beta</fullName>
    </recommendedName>
    <alternativeName>
        <fullName>Follicle-stimulating hormone beta subunit</fullName>
        <shortName>FSH-B</shortName>
        <shortName>FSH-beta</shortName>
    </alternativeName>
    <alternativeName>
        <fullName>Follitropin beta chain</fullName>
    </alternativeName>
</protein>
<proteinExistence type="evidence at transcript level"/>
<accession>Q6EV79</accession>
<sequence>MKTVQFCFLFCCWKAICCNSCELTNITIAIEKEECRFCISINTTWCAGYCYTRDLVYKDPARPNIQKTCTFKEVVYETVRVPGCAHHADSLYTYPVATQCHCGKCDSDSTDCTVRGLGPSYCSFSEMKE</sequence>
<gene>
    <name type="primary">FSHB</name>
</gene>